<comment type="function">
    <text evidence="1">Plays an essential role in virion nuclear egress, the first step of virion release from infected cell. Within the host nucleus, NEC1 interacts with the newly formed capsid through the vertexes and directs it to the inner nuclear membrane by associating with NEC2. Induces the budding of the capsid at the inner nuclear membrane as well as its envelopment into the perinuclear space. There, the NEC1/NEC2 complex promotes the fusion of the enveloped capsid with the outer nuclear membrane and the subsequent release of the viral capsid into the cytoplasm where it will reach the secondary budding sites in the host Golgi or trans-Golgi network.</text>
</comment>
<comment type="subunit">
    <text evidence="1">Forms a heterohexameric complex with NEC1.</text>
</comment>
<comment type="subcellular location">
    <subcellularLocation>
        <location evidence="1">Host nucleus inner membrane</location>
        <topology evidence="1">Single-pass membrane protein</topology>
    </subcellularLocation>
    <text evidence="1">Also localizes at the transient membrane of perinuclear virions.</text>
</comment>
<comment type="PTM">
    <text evidence="1">Phosphorylated.</text>
</comment>
<comment type="similarity">
    <text evidence="1">Belongs to the herpesviridae NEC2 protein family.</text>
</comment>
<gene>
    <name evidence="1" type="primary">NEC2</name>
    <name type="ordered locus">26</name>
</gene>
<organismHost>
    <name type="scientific">Equus caballus</name>
    <name type="common">Horse</name>
    <dbReference type="NCBI Taxonomy" id="9796"/>
</organismHost>
<protein>
    <recommendedName>
        <fullName evidence="1">Nuclear egress protein 2</fullName>
    </recommendedName>
</protein>
<reference evidence="3 4" key="1">
    <citation type="submission" date="2003-11" db="EMBL/GenBank/DDBJ databases">
        <authorList>
            <person name="Davis-Poynter N."/>
            <person name="Nugent J."/>
            <person name="Birch-Machin I."/>
            <person name="Allen G.P."/>
        </authorList>
    </citation>
    <scope>NUCLEOTIDE SEQUENCE [LARGE SCALE GENOMIC DNA]</scope>
</reference>
<proteinExistence type="inferred from homology"/>
<sequence length="275" mass="30680">MDSYNYRDFAVGGGLLQRIRLVVSGSLHCGESDATLNDPKHLPARCVFQFSGPDNNSVTFPIEYVLRLMKNWARSQCDPYIRIQNTGVSVLFQGFFFAPPNAPMASITSEHNNVILKSTHTTGLALSGIERVKRGGGLDLRPLQAMMQISCFTRMPVVQLSFRFMGPEDASRTQRLLERATSFGAMELHQKRTVDSCDRSNGIVSPREHRECRERQKRRPTPKRCASEVFASLASISSAFASERVKRRPVRIAAAILAFVFVAVILAIATKGRLF</sequence>
<feature type="chain" id="PRO_0000116028" description="Nuclear egress protein 2">
    <location>
        <begin position="1"/>
        <end position="275"/>
    </location>
</feature>
<feature type="topological domain" description="Perinuclear space" evidence="1">
    <location>
        <begin position="1"/>
        <end position="251"/>
    </location>
</feature>
<feature type="transmembrane region" description="Helical" evidence="1">
    <location>
        <begin position="252"/>
        <end position="272"/>
    </location>
</feature>
<feature type="topological domain" description="Nuclear" evidence="1">
    <location>
        <begin position="273"/>
        <end position="275"/>
    </location>
</feature>
<feature type="region of interest" description="Disordered" evidence="2">
    <location>
        <begin position="197"/>
        <end position="221"/>
    </location>
</feature>
<organism>
    <name type="scientific">Equine herpesvirus 1 (strain V592)</name>
    <name type="common">EHV-1</name>
    <name type="synonym">Equine abortion virus</name>
    <dbReference type="NCBI Taxonomy" id="310273"/>
    <lineage>
        <taxon>Viruses</taxon>
        <taxon>Duplodnaviria</taxon>
        <taxon>Heunggongvirae</taxon>
        <taxon>Peploviricota</taxon>
        <taxon>Herviviricetes</taxon>
        <taxon>Herpesvirales</taxon>
        <taxon>Orthoherpesviridae</taxon>
        <taxon>Alphaherpesvirinae</taxon>
        <taxon>Varicellovirus</taxon>
        <taxon>Varicellovirus equidalpha1</taxon>
        <taxon>Equid alphaherpesvirus 1</taxon>
    </lineage>
</organism>
<keyword id="KW-1043">Host membrane</keyword>
<keyword id="KW-1048">Host nucleus</keyword>
<keyword id="KW-0426">Late protein</keyword>
<keyword id="KW-0472">Membrane</keyword>
<keyword id="KW-0597">Phosphoprotein</keyword>
<keyword id="KW-0812">Transmembrane</keyword>
<keyword id="KW-1133">Transmembrane helix</keyword>
<dbReference type="EMBL" id="AY464052">
    <property type="protein sequence ID" value="AAS45910.1"/>
    <property type="molecule type" value="Genomic_DNA"/>
</dbReference>
<dbReference type="SMR" id="P84406"/>
<dbReference type="KEGG" id="vg:1487492"/>
<dbReference type="Proteomes" id="UP000008296">
    <property type="component" value="Segment"/>
</dbReference>
<dbReference type="GO" id="GO:0044201">
    <property type="term" value="C:host cell nuclear inner membrane"/>
    <property type="evidence" value="ECO:0007669"/>
    <property type="project" value="UniProtKB-SubCell"/>
</dbReference>
<dbReference type="GO" id="GO:0016020">
    <property type="term" value="C:membrane"/>
    <property type="evidence" value="ECO:0007669"/>
    <property type="project" value="UniProtKB-KW"/>
</dbReference>
<dbReference type="HAMAP" id="MF_04024">
    <property type="entry name" value="HSV_NEC2"/>
    <property type="match status" value="1"/>
</dbReference>
<dbReference type="InterPro" id="IPR007626">
    <property type="entry name" value="Herpesvirus_viron_egress-type"/>
</dbReference>
<dbReference type="Pfam" id="PF04541">
    <property type="entry name" value="Herpes_U34"/>
    <property type="match status" value="1"/>
</dbReference>
<evidence type="ECO:0000255" key="1">
    <source>
        <dbReference type="HAMAP-Rule" id="MF_04024"/>
    </source>
</evidence>
<evidence type="ECO:0000256" key="2">
    <source>
        <dbReference type="SAM" id="MobiDB-lite"/>
    </source>
</evidence>
<evidence type="ECO:0000305" key="3"/>
<evidence type="ECO:0000312" key="4">
    <source>
        <dbReference type="EMBL" id="AAS45910.1"/>
    </source>
</evidence>
<name>NEC2_EHV1V</name>
<accession>P84406</accession>
<accession>Q6S6P5</accession>